<proteinExistence type="inferred from homology"/>
<feature type="signal peptide" evidence="2">
    <location>
        <begin position="1"/>
        <end position="20"/>
    </location>
</feature>
<feature type="chain" id="PRO_0000407502" description="Vacuolar protein sorting/targeting protein 10">
    <location>
        <begin position="21"/>
        <end position="1508"/>
    </location>
</feature>
<feature type="topological domain" description="Lumenal" evidence="2">
    <location>
        <begin position="21"/>
        <end position="1348"/>
    </location>
</feature>
<feature type="transmembrane region" description="Helical" evidence="2">
    <location>
        <begin position="1349"/>
        <end position="1369"/>
    </location>
</feature>
<feature type="topological domain" description="Cytoplasmic" evidence="2">
    <location>
        <begin position="1370"/>
        <end position="1404"/>
    </location>
</feature>
<feature type="transmembrane region" description="Helical" evidence="2">
    <location>
        <begin position="1405"/>
        <end position="1425"/>
    </location>
</feature>
<feature type="topological domain" description="Lumenal" evidence="2">
    <location>
        <begin position="1426"/>
        <end position="1508"/>
    </location>
</feature>
<feature type="repeat" description="BNR 1">
    <location>
        <begin position="164"/>
        <end position="172"/>
    </location>
</feature>
<feature type="repeat" description="BNR 2">
    <location>
        <begin position="372"/>
        <end position="381"/>
    </location>
</feature>
<feature type="repeat" description="BNR 3">
    <location>
        <begin position="452"/>
        <end position="461"/>
    </location>
</feature>
<feature type="repeat" description="BNR 4">
    <location>
        <begin position="497"/>
        <end position="507"/>
    </location>
</feature>
<feature type="repeat" description="BNR 5">
    <location>
        <begin position="717"/>
        <end position="726"/>
    </location>
</feature>
<feature type="repeat" description="BNR 6">
    <location>
        <begin position="812"/>
        <end position="822"/>
    </location>
</feature>
<feature type="repeat" description="BNR 7">
    <location>
        <begin position="1095"/>
        <end position="1105"/>
    </location>
</feature>
<feature type="repeat" description="BNR 8">
    <location>
        <begin position="1137"/>
        <end position="1146"/>
    </location>
</feature>
<feature type="glycosylation site" description="N-linked (GlcNAc...) asparagine" evidence="2">
    <location>
        <position position="353"/>
    </location>
</feature>
<feature type="glycosylation site" description="N-linked (GlcNAc...) asparagine" evidence="2">
    <location>
        <position position="789"/>
    </location>
</feature>
<feature type="glycosylation site" description="N-linked (GlcNAc...) asparagine" evidence="2">
    <location>
        <position position="911"/>
    </location>
</feature>
<feature type="glycosylation site" description="N-linked (GlcNAc...) asparagine" evidence="2">
    <location>
        <position position="1243"/>
    </location>
</feature>
<feature type="glycosylation site" description="N-linked (GlcNAc...) asparagine" evidence="2">
    <location>
        <position position="1346"/>
    </location>
</feature>
<gene>
    <name type="primary">VPS10</name>
    <name type="ordered locus">AFR018C</name>
</gene>
<name>VPS10_EREGS</name>
<reference key="1">
    <citation type="journal article" date="2004" name="Science">
        <title>The Ashbya gossypii genome as a tool for mapping the ancient Saccharomyces cerevisiae genome.</title>
        <authorList>
            <person name="Dietrich F.S."/>
            <person name="Voegeli S."/>
            <person name="Brachat S."/>
            <person name="Lerch A."/>
            <person name="Gates K."/>
            <person name="Steiner S."/>
            <person name="Mohr C."/>
            <person name="Poehlmann R."/>
            <person name="Luedi P."/>
            <person name="Choi S."/>
            <person name="Wing R.A."/>
            <person name="Flavier A."/>
            <person name="Gaffney T.D."/>
            <person name="Philippsen P."/>
        </authorList>
    </citation>
    <scope>NUCLEOTIDE SEQUENCE [LARGE SCALE GENOMIC DNA]</scope>
    <source>
        <strain>ATCC 10895 / CBS 109.51 / FGSC 9923 / NRRL Y-1056</strain>
    </source>
</reference>
<reference key="2">
    <citation type="journal article" date="2013" name="G3 (Bethesda)">
        <title>Genomes of Ashbya fungi isolated from insects reveal four mating-type loci, numerous translocations, lack of transposons, and distinct gene duplications.</title>
        <authorList>
            <person name="Dietrich F.S."/>
            <person name="Voegeli S."/>
            <person name="Kuo S."/>
            <person name="Philippsen P."/>
        </authorList>
    </citation>
    <scope>GENOME REANNOTATION</scope>
    <source>
        <strain>ATCC 10895 / CBS 109.51 / FGSC 9923 / NRRL Y-1056</strain>
    </source>
</reference>
<sequence>MVGMLFVWQTFLFVWACAAAVEVGEKPRPVIDIVRDVDNLGSIWQFKGTNTLIRHQGREILVRHGGDQWSTVKKFDQGVNTVEVDPYYPERRAFAWLENNELYKTDDCGKTWARVMHVEAEPGENLQRYSVYSNPDNYKYLMVTSHFERKDSSPVLAESYEKQWVSQDGGKTIAPLGHPDPGVYRLCHFLRQARNHDVAKDSTILCIEHDAQKHTAVLYRTDDFGKSKQALDSFDDEIVSSVGLLGKYILVTTTEDAYNKHAVQHVWVSRDGDKFQKIIFPTHIRDNFFRAVTTSTGNQIIFSIPAGKHSHSRKNALYANYISDSSGIQFHAVADSLDERYKELGPVMALDANGTLSMVARKSSTEDQVTLLSYDYGYSWQPMHLAEGEDHKALGCSKGGKECELPVQLSQLVSSSGLVGHGESATSGILMGIVLKKRGSRGPRKHKYLSVISRDYGLTWSVAFEYPVLSFAGNYGNILLACPYNPGDDGDPEEEIYYSLDQGHTWEEHHIEGKYEFVRVHSAISDGSSTAFSFLAVGDDQNTIVVDCIFTDIHNGKECTDGDMEEYKLRNGNCLNGARYTINKRKSEAACLLKNDPSVINPLVKPCDCTNADYECSLGFLGLPDKGCTADLGMLRSAGACKDNPRELMPMHKIKGNECTKDLNIEPVKVDCSAVQNRPDIEVTAHVFKTQFETYQYFNSAEDDSLMVLTKDKRALISHDSGKTFKMLDTLGSGAELITFNRYFGDLAYIFASDDVLYITDDRGYHFYAVDLPEVRHLFLPLAFHAKDNQTFIYFGGKDCEKLGPKCHSTAYITTDGGRNFREMLTGAVSCEFVGSIYSHPANKDMIMCEIENKKERRNILLRSTDEFRTSDKVFDSIIGFHTTGDFTAIAVSEGRQQVSSYLTIDGVHFNESRFPPDFVAPEKQQSYSVLSAHEGAIFLHMSKSLVKHKEYGTLVKSDSNGIDFVVLKDGVNSNAEGLVDFETPEGLDGVILINVVENLDQVQKGKAKAKHLKTAISFNDGVDWKYLSPPGKDSSGKKYPCHGKNRAKCSLNLHGYTERKDLRDTYSSGSAIGYMLGVGNVGEHLLPYEQCSTFLTTDGGVTWTEVKSTPHQWEFGDRGSIIVLVPDGVKTNSITYSVDAGRSWQDFKFADEEVIIDDIITVPYDTSMRFLLISKEHLRGKSKTYAISFAHIFKRQCEFHPGGGRHNGDFEYTSIKHPDYKCLFGKEVEFLKRIKYDCFIGNASYTKDYRTSRICPCTRQDFECDYNYIRTSDGTCKLPSGVKPEAPSAVCERNRDLVEYFQPTGYRKIPLSKCEGGLKLQRTDSPHPCPGKEKEFYEKYPSSTNASSVVFWWLLLTMVLLVPLWVIYDRGIRRNGGFSRFGEIRLDDDDLIEENGLDRAINKVVKVGAYGVAGLFGFLLLLKSKAGARIRRFRESVSSRRGPSYSSLISDQFLDDANDLLVGHDNDANNLNAFLDEDGQHFDVDDEIEGADQASYHDDVDLGRTSE</sequence>
<accession>Q754Q4</accession>
<keyword id="KW-0325">Glycoprotein</keyword>
<keyword id="KW-0333">Golgi apparatus</keyword>
<keyword id="KW-0472">Membrane</keyword>
<keyword id="KW-0653">Protein transport</keyword>
<keyword id="KW-0675">Receptor</keyword>
<keyword id="KW-1185">Reference proteome</keyword>
<keyword id="KW-0677">Repeat</keyword>
<keyword id="KW-0732">Signal</keyword>
<keyword id="KW-0812">Transmembrane</keyword>
<keyword id="KW-1133">Transmembrane helix</keyword>
<keyword id="KW-0813">Transport</keyword>
<comment type="function">
    <text evidence="1">Functions as a sorting receptor in the Golgi compartment required for the intracellular sorting and delivery of soluble vacuolar proteins, like carboxypeptidase Y (CPY) and proteinase A. Executes multiple rounds of sorting by cycling between the late Golgi and a prevacuolar endosome-like compartment (By similarity).</text>
</comment>
<comment type="subcellular location">
    <subcellularLocation>
        <location evidence="1">Golgi apparatus</location>
        <location evidence="1">trans-Golgi network membrane</location>
        <topology evidence="1">Multi-pass membrane protein</topology>
    </subcellularLocation>
    <subcellularLocation>
        <location evidence="1">Prevacuolar compartment membrane</location>
        <topology evidence="1">Multi-pass membrane protein</topology>
    </subcellularLocation>
    <text evidence="1">Cycles between the Golgi apparatus and the prevacuolar compartment.</text>
</comment>
<comment type="similarity">
    <text evidence="3">Belongs to the VPS10-related sortilin family.</text>
</comment>
<evidence type="ECO:0000250" key="1"/>
<evidence type="ECO:0000255" key="2"/>
<evidence type="ECO:0000305" key="3"/>
<dbReference type="EMBL" id="AE016819">
    <property type="protein sequence ID" value="AAS53389.2"/>
    <property type="molecule type" value="Genomic_DNA"/>
</dbReference>
<dbReference type="RefSeq" id="NP_985565.2">
    <property type="nucleotide sequence ID" value="NM_210919.2"/>
</dbReference>
<dbReference type="SMR" id="Q754Q4"/>
<dbReference type="FunCoup" id="Q754Q4">
    <property type="interactions" value="236"/>
</dbReference>
<dbReference type="STRING" id="284811.Q754Q4"/>
<dbReference type="GlyCosmos" id="Q754Q4">
    <property type="glycosylation" value="5 sites, No reported glycans"/>
</dbReference>
<dbReference type="EnsemblFungi" id="AAS53389">
    <property type="protein sequence ID" value="AAS53389"/>
    <property type="gene ID" value="AGOS_AFR018C"/>
</dbReference>
<dbReference type="GeneID" id="4621804"/>
<dbReference type="KEGG" id="ago:AGOS_AFR018C"/>
<dbReference type="eggNOG" id="KOG3511">
    <property type="taxonomic scope" value="Eukaryota"/>
</dbReference>
<dbReference type="HOGENOM" id="CLU_000700_0_1_1"/>
<dbReference type="InParanoid" id="Q754Q4"/>
<dbReference type="OMA" id="ECDYNYY"/>
<dbReference type="OrthoDB" id="443634at2759"/>
<dbReference type="Proteomes" id="UP000000591">
    <property type="component" value="Chromosome VI"/>
</dbReference>
<dbReference type="GO" id="GO:0005829">
    <property type="term" value="C:cytosol"/>
    <property type="evidence" value="ECO:0007669"/>
    <property type="project" value="GOC"/>
</dbReference>
<dbReference type="GO" id="GO:0005794">
    <property type="term" value="C:Golgi apparatus"/>
    <property type="evidence" value="ECO:0000318"/>
    <property type="project" value="GO_Central"/>
</dbReference>
<dbReference type="GO" id="GO:0016020">
    <property type="term" value="C:membrane"/>
    <property type="evidence" value="ECO:0000318"/>
    <property type="project" value="GO_Central"/>
</dbReference>
<dbReference type="GO" id="GO:0006895">
    <property type="term" value="P:Golgi to endosome transport"/>
    <property type="evidence" value="ECO:0000318"/>
    <property type="project" value="GO_Central"/>
</dbReference>
<dbReference type="GO" id="GO:0006896">
    <property type="term" value="P:Golgi to vacuole transport"/>
    <property type="evidence" value="ECO:0000318"/>
    <property type="project" value="GO_Central"/>
</dbReference>
<dbReference type="GO" id="GO:0006623">
    <property type="term" value="P:protein targeting to vacuole"/>
    <property type="evidence" value="ECO:0000318"/>
    <property type="project" value="GO_Central"/>
</dbReference>
<dbReference type="CDD" id="cd15482">
    <property type="entry name" value="Sialidase_non-viral"/>
    <property type="match status" value="1"/>
</dbReference>
<dbReference type="FunFam" id="3.30.60.270:FF:000005">
    <property type="entry name" value="Sortilin"/>
    <property type="match status" value="1"/>
</dbReference>
<dbReference type="Gene3D" id="3.30.60.270">
    <property type="match status" value="1"/>
</dbReference>
<dbReference type="Gene3D" id="2.130.10.10">
    <property type="entry name" value="YVTN repeat-like/Quinoprotein amine dehydrogenase"/>
    <property type="match status" value="2"/>
</dbReference>
<dbReference type="InterPro" id="IPR031777">
    <property type="entry name" value="Sortilin_C"/>
</dbReference>
<dbReference type="InterPro" id="IPR031778">
    <property type="entry name" value="Sortilin_N"/>
</dbReference>
<dbReference type="InterPro" id="IPR006581">
    <property type="entry name" value="VPS10"/>
</dbReference>
<dbReference type="InterPro" id="IPR050310">
    <property type="entry name" value="VPS10-sortilin"/>
</dbReference>
<dbReference type="InterPro" id="IPR015943">
    <property type="entry name" value="WD40/YVTN_repeat-like_dom_sf"/>
</dbReference>
<dbReference type="PANTHER" id="PTHR12106">
    <property type="entry name" value="SORTILIN RELATED"/>
    <property type="match status" value="1"/>
</dbReference>
<dbReference type="PANTHER" id="PTHR12106:SF27">
    <property type="entry name" value="SORTILIN-RELATED RECEPTOR"/>
    <property type="match status" value="1"/>
</dbReference>
<dbReference type="Pfam" id="PF15902">
    <property type="entry name" value="Sortilin-Vps10"/>
    <property type="match status" value="2"/>
</dbReference>
<dbReference type="Pfam" id="PF15901">
    <property type="entry name" value="Sortilin_C"/>
    <property type="match status" value="2"/>
</dbReference>
<dbReference type="SMART" id="SM00602">
    <property type="entry name" value="VPS10"/>
    <property type="match status" value="2"/>
</dbReference>
<dbReference type="SUPFAM" id="SSF110296">
    <property type="entry name" value="Oligoxyloglucan reducing end-specific cellobiohydrolase"/>
    <property type="match status" value="2"/>
</dbReference>
<protein>
    <recommendedName>
        <fullName>Vacuolar protein sorting/targeting protein 10</fullName>
    </recommendedName>
    <alternativeName>
        <fullName>Carboxypeptidase Y receptor</fullName>
        <shortName>CPY receptor</shortName>
    </alternativeName>
    <alternativeName>
        <fullName>Sortilin VPS10</fullName>
    </alternativeName>
    <alternativeName>
        <fullName>Vacuolar carboxypeptidase sorting receptor VPS10</fullName>
    </alternativeName>
</protein>
<organism>
    <name type="scientific">Eremothecium gossypii (strain ATCC 10895 / CBS 109.51 / FGSC 9923 / NRRL Y-1056)</name>
    <name type="common">Yeast</name>
    <name type="synonym">Ashbya gossypii</name>
    <dbReference type="NCBI Taxonomy" id="284811"/>
    <lineage>
        <taxon>Eukaryota</taxon>
        <taxon>Fungi</taxon>
        <taxon>Dikarya</taxon>
        <taxon>Ascomycota</taxon>
        <taxon>Saccharomycotina</taxon>
        <taxon>Saccharomycetes</taxon>
        <taxon>Saccharomycetales</taxon>
        <taxon>Saccharomycetaceae</taxon>
        <taxon>Eremothecium</taxon>
    </lineage>
</organism>